<sequence length="199" mass="22832">MIRRNRQMNRQPLPIIWQRIIFDPLSYIHPQRLQIAPEMIVRPAARAAANELILAAWRLKNGEKECIQNSLTQLWLRQWRRLPQVAYLLGCHKLRADLARQGALLGLPDWAQAFLAMHQGTSLSVCNKAPNHRFLLSVGYAQLNALNEFLPESLAQRFPLLFPPFIEEALKQDAVEMSILLLALQYAQKYPNTVPAFAC</sequence>
<keyword id="KW-0843">Virulence</keyword>
<comment type="function">
    <text evidence="1">Oxygen-regulated protein required for bacterial internalization.</text>
</comment>
<dbReference type="EMBL" id="CP001363">
    <property type="protein sequence ID" value="ACY89883.1"/>
    <property type="molecule type" value="Genomic_DNA"/>
</dbReference>
<dbReference type="EMBL" id="U21676">
    <property type="protein sequence ID" value="AAB60192.1"/>
    <property type="molecule type" value="Genomic_DNA"/>
</dbReference>
<dbReference type="PIR" id="S69789">
    <property type="entry name" value="S69789"/>
</dbReference>
<dbReference type="RefSeq" id="WP_001574876.1">
    <property type="nucleotide sequence ID" value="NZ_CP043402.1"/>
</dbReference>
<dbReference type="KEGG" id="seo:STM14_3469"/>
<dbReference type="PATRIC" id="fig|588858.6.peg.3190"/>
<dbReference type="HOGENOM" id="CLU_092002_0_0_6"/>
<dbReference type="BioCyc" id="SENT588858:STM14_RS15390-MONOMER"/>
<dbReference type="PHI-base" id="PHI:10091"/>
<dbReference type="Proteomes" id="UP000002695">
    <property type="component" value="Chromosome"/>
</dbReference>
<dbReference type="InterPro" id="IPR013388">
    <property type="entry name" value="T3SS_OrgA/MxiK"/>
</dbReference>
<dbReference type="NCBIfam" id="TIGR02555">
    <property type="entry name" value="OrgA_MxiK"/>
    <property type="match status" value="1"/>
</dbReference>
<dbReference type="NCBIfam" id="NF011851">
    <property type="entry name" value="PRK15323.1"/>
    <property type="match status" value="1"/>
</dbReference>
<dbReference type="Pfam" id="PF09482">
    <property type="entry name" value="OrgA_MxiK"/>
    <property type="match status" value="1"/>
</dbReference>
<reference key="1">
    <citation type="journal article" date="2010" name="J. Bacteriol.">
        <title>Short-term signatures of evolutionary change in the Salmonella enterica serovar typhimurium 14028 genome.</title>
        <authorList>
            <person name="Jarvik T."/>
            <person name="Smillie C."/>
            <person name="Groisman E.A."/>
            <person name="Ochman H."/>
        </authorList>
    </citation>
    <scope>NUCLEOTIDE SEQUENCE [LARGE SCALE GENOMIC DNA]</scope>
    <source>
        <strain>14028s / SGSC 2262</strain>
    </source>
</reference>
<reference key="2">
    <citation type="journal article" date="1995" name="Mol. Microbiol.">
        <title>PhoP/PhoQ transcriptional repression of Salmonella typhimurium invasion genes: evidence for a role in protein secretion.</title>
        <authorList>
            <person name="Pegues D.A."/>
            <person name="Hantman M.J."/>
            <person name="Behlau I."/>
            <person name="Miller S.I."/>
        </authorList>
    </citation>
    <scope>NUCLEOTIDE SEQUENCE [GENOMIC DNA] OF 1-186</scope>
    <source>
        <strain>ATCC 14028s / SGSG 2262</strain>
    </source>
</reference>
<protein>
    <recommendedName>
        <fullName>Oxygen-regulated invasion protein OrgA</fullName>
    </recommendedName>
</protein>
<name>ORGA_SALT1</name>
<organism>
    <name type="scientific">Salmonella typhimurium (strain 14028s / SGSC 2262)</name>
    <dbReference type="NCBI Taxonomy" id="588858"/>
    <lineage>
        <taxon>Bacteria</taxon>
        <taxon>Pseudomonadati</taxon>
        <taxon>Pseudomonadota</taxon>
        <taxon>Gammaproteobacteria</taxon>
        <taxon>Enterobacterales</taxon>
        <taxon>Enterobacteriaceae</taxon>
        <taxon>Salmonella</taxon>
    </lineage>
</organism>
<feature type="chain" id="PRO_0000406078" description="Oxygen-regulated invasion protein OrgA">
    <location>
        <begin position="1"/>
        <end position="199"/>
    </location>
</feature>
<accession>D0ZV07</accession>
<accession>P40823</accession>
<accession>P58653</accession>
<gene>
    <name type="primary">orgA</name>
    <name type="ordered locus">STM14_3469</name>
</gene>
<proteinExistence type="inferred from homology"/>
<evidence type="ECO:0000250" key="1"/>